<comment type="function">
    <text evidence="1">Catalyzes the formation of S-adenosylmethionine (AdoMet) from methionine and ATP. The overall synthetic reaction is composed of two sequential steps, AdoMet formation and the subsequent tripolyphosphate hydrolysis which occurs prior to release of AdoMet from the enzyme.</text>
</comment>
<comment type="catalytic activity">
    <reaction evidence="1">
        <text>L-methionine + ATP + H2O = S-adenosyl-L-methionine + phosphate + diphosphate</text>
        <dbReference type="Rhea" id="RHEA:21080"/>
        <dbReference type="ChEBI" id="CHEBI:15377"/>
        <dbReference type="ChEBI" id="CHEBI:30616"/>
        <dbReference type="ChEBI" id="CHEBI:33019"/>
        <dbReference type="ChEBI" id="CHEBI:43474"/>
        <dbReference type="ChEBI" id="CHEBI:57844"/>
        <dbReference type="ChEBI" id="CHEBI:59789"/>
        <dbReference type="EC" id="2.5.1.6"/>
    </reaction>
</comment>
<comment type="cofactor">
    <cofactor evidence="1">
        <name>Mg(2+)</name>
        <dbReference type="ChEBI" id="CHEBI:18420"/>
    </cofactor>
    <text evidence="1">Binds 2 divalent ions per subunit.</text>
</comment>
<comment type="cofactor">
    <cofactor evidence="1">
        <name>K(+)</name>
        <dbReference type="ChEBI" id="CHEBI:29103"/>
    </cofactor>
    <text evidence="1">Binds 1 potassium ion per subunit.</text>
</comment>
<comment type="pathway">
    <text evidence="1">Amino-acid biosynthesis; S-adenosyl-L-methionine biosynthesis; S-adenosyl-L-methionine from L-methionine: step 1/1.</text>
</comment>
<comment type="subunit">
    <text evidence="1">Homotetramer; dimer of dimers.</text>
</comment>
<comment type="subcellular location">
    <subcellularLocation>
        <location evidence="1">Cytoplasm</location>
    </subcellularLocation>
</comment>
<comment type="similarity">
    <text evidence="1">Belongs to the AdoMet synthase family.</text>
</comment>
<sequence length="388" mass="41997">MGRTHLFTSESVTEGHPDKVADCISDAVLDALISQDKNCRVACETLVTTGVAFIAGEITANATVNFPDIVRDTIRRIGYTSSDMGFDWQTCSVVTSIDKQSPDIAQGVNEGDGLFKEQGAGDQGLMFGFACDETPELMPAPISYAHKLTKQLADVRKNGVLDFLRPDGKSQVTVQYEDGQPKRIDTIVISSQHSPDVTYDELKDRIIAEVILPVIPGELLDEQTKYFINPTGRFVVGGPMGDCGLTGRKIIVDTYGGMGRHGGGCFSGKDPSKVDRSASYMGRHVAKNIVAAGIAKRCEVQVAYAIGVAQPVSVMVDLMGTGRIPEADAERIVREVFDLRPAAIIDYLDLKRPIYGPTAAYGHFGRTGDSFPWESTRRADEIRGKAGI</sequence>
<keyword id="KW-0067">ATP-binding</keyword>
<keyword id="KW-0963">Cytoplasm</keyword>
<keyword id="KW-0460">Magnesium</keyword>
<keyword id="KW-0479">Metal-binding</keyword>
<keyword id="KW-0547">Nucleotide-binding</keyword>
<keyword id="KW-0554">One-carbon metabolism</keyword>
<keyword id="KW-0630">Potassium</keyword>
<keyword id="KW-1185">Reference proteome</keyword>
<keyword id="KW-0808">Transferase</keyword>
<gene>
    <name evidence="1" type="primary">metK</name>
    <name type="ordered locus">Dole_2850</name>
</gene>
<dbReference type="EC" id="2.5.1.6" evidence="1"/>
<dbReference type="EMBL" id="CP000859">
    <property type="protein sequence ID" value="ABW68653.1"/>
    <property type="molecule type" value="Genomic_DNA"/>
</dbReference>
<dbReference type="RefSeq" id="WP_012176264.1">
    <property type="nucleotide sequence ID" value="NC_009943.1"/>
</dbReference>
<dbReference type="SMR" id="A8ZYC8"/>
<dbReference type="STRING" id="96561.Dole_2850"/>
<dbReference type="KEGG" id="dol:Dole_2850"/>
<dbReference type="eggNOG" id="COG0192">
    <property type="taxonomic scope" value="Bacteria"/>
</dbReference>
<dbReference type="HOGENOM" id="CLU_041802_1_1_7"/>
<dbReference type="OrthoDB" id="9801686at2"/>
<dbReference type="UniPathway" id="UPA00315">
    <property type="reaction ID" value="UER00080"/>
</dbReference>
<dbReference type="Proteomes" id="UP000008561">
    <property type="component" value="Chromosome"/>
</dbReference>
<dbReference type="GO" id="GO:0005737">
    <property type="term" value="C:cytoplasm"/>
    <property type="evidence" value="ECO:0007669"/>
    <property type="project" value="UniProtKB-SubCell"/>
</dbReference>
<dbReference type="GO" id="GO:0005524">
    <property type="term" value="F:ATP binding"/>
    <property type="evidence" value="ECO:0007669"/>
    <property type="project" value="UniProtKB-UniRule"/>
</dbReference>
<dbReference type="GO" id="GO:0000287">
    <property type="term" value="F:magnesium ion binding"/>
    <property type="evidence" value="ECO:0007669"/>
    <property type="project" value="UniProtKB-UniRule"/>
</dbReference>
<dbReference type="GO" id="GO:0004478">
    <property type="term" value="F:methionine adenosyltransferase activity"/>
    <property type="evidence" value="ECO:0007669"/>
    <property type="project" value="UniProtKB-UniRule"/>
</dbReference>
<dbReference type="GO" id="GO:0006730">
    <property type="term" value="P:one-carbon metabolic process"/>
    <property type="evidence" value="ECO:0007669"/>
    <property type="project" value="UniProtKB-KW"/>
</dbReference>
<dbReference type="GO" id="GO:0006556">
    <property type="term" value="P:S-adenosylmethionine biosynthetic process"/>
    <property type="evidence" value="ECO:0007669"/>
    <property type="project" value="UniProtKB-UniRule"/>
</dbReference>
<dbReference type="CDD" id="cd18079">
    <property type="entry name" value="S-AdoMet_synt"/>
    <property type="match status" value="1"/>
</dbReference>
<dbReference type="FunFam" id="3.30.300.10:FF:000003">
    <property type="entry name" value="S-adenosylmethionine synthase"/>
    <property type="match status" value="1"/>
</dbReference>
<dbReference type="Gene3D" id="3.30.300.10">
    <property type="match status" value="3"/>
</dbReference>
<dbReference type="HAMAP" id="MF_00086">
    <property type="entry name" value="S_AdoMet_synth1"/>
    <property type="match status" value="1"/>
</dbReference>
<dbReference type="InterPro" id="IPR022631">
    <property type="entry name" value="ADOMET_SYNTHASE_CS"/>
</dbReference>
<dbReference type="InterPro" id="IPR022630">
    <property type="entry name" value="S-AdoMet_synt_C"/>
</dbReference>
<dbReference type="InterPro" id="IPR022629">
    <property type="entry name" value="S-AdoMet_synt_central"/>
</dbReference>
<dbReference type="InterPro" id="IPR022628">
    <property type="entry name" value="S-AdoMet_synt_N"/>
</dbReference>
<dbReference type="InterPro" id="IPR002133">
    <property type="entry name" value="S-AdoMet_synthetase"/>
</dbReference>
<dbReference type="InterPro" id="IPR022636">
    <property type="entry name" value="S-AdoMet_synthetase_sfam"/>
</dbReference>
<dbReference type="NCBIfam" id="TIGR01034">
    <property type="entry name" value="metK"/>
    <property type="match status" value="1"/>
</dbReference>
<dbReference type="PANTHER" id="PTHR11964">
    <property type="entry name" value="S-ADENOSYLMETHIONINE SYNTHETASE"/>
    <property type="match status" value="1"/>
</dbReference>
<dbReference type="Pfam" id="PF02773">
    <property type="entry name" value="S-AdoMet_synt_C"/>
    <property type="match status" value="1"/>
</dbReference>
<dbReference type="Pfam" id="PF02772">
    <property type="entry name" value="S-AdoMet_synt_M"/>
    <property type="match status" value="1"/>
</dbReference>
<dbReference type="Pfam" id="PF00438">
    <property type="entry name" value="S-AdoMet_synt_N"/>
    <property type="match status" value="1"/>
</dbReference>
<dbReference type="PIRSF" id="PIRSF000497">
    <property type="entry name" value="MAT"/>
    <property type="match status" value="1"/>
</dbReference>
<dbReference type="SUPFAM" id="SSF55973">
    <property type="entry name" value="S-adenosylmethionine synthetase"/>
    <property type="match status" value="3"/>
</dbReference>
<dbReference type="PROSITE" id="PS00376">
    <property type="entry name" value="ADOMET_SYNTHASE_1"/>
    <property type="match status" value="1"/>
</dbReference>
<dbReference type="PROSITE" id="PS00377">
    <property type="entry name" value="ADOMET_SYNTHASE_2"/>
    <property type="match status" value="1"/>
</dbReference>
<name>METK_DESOH</name>
<proteinExistence type="inferred from homology"/>
<feature type="chain" id="PRO_1000196704" description="S-adenosylmethionine synthase">
    <location>
        <begin position="1"/>
        <end position="388"/>
    </location>
</feature>
<feature type="region of interest" description="Flexible loop" evidence="1">
    <location>
        <begin position="100"/>
        <end position="110"/>
    </location>
</feature>
<feature type="binding site" description="in other chain" evidence="1">
    <location>
        <position position="16"/>
    </location>
    <ligand>
        <name>ATP</name>
        <dbReference type="ChEBI" id="CHEBI:30616"/>
        <note>ligand shared between two neighboring subunits</note>
    </ligand>
</feature>
<feature type="binding site" evidence="1">
    <location>
        <position position="18"/>
    </location>
    <ligand>
        <name>Mg(2+)</name>
        <dbReference type="ChEBI" id="CHEBI:18420"/>
    </ligand>
</feature>
<feature type="binding site" evidence="1">
    <location>
        <position position="44"/>
    </location>
    <ligand>
        <name>K(+)</name>
        <dbReference type="ChEBI" id="CHEBI:29103"/>
    </ligand>
</feature>
<feature type="binding site" description="in other chain" evidence="1">
    <location>
        <position position="57"/>
    </location>
    <ligand>
        <name>L-methionine</name>
        <dbReference type="ChEBI" id="CHEBI:57844"/>
        <note>ligand shared between two neighboring subunits</note>
    </ligand>
</feature>
<feature type="binding site" description="in other chain" evidence="1">
    <location>
        <position position="100"/>
    </location>
    <ligand>
        <name>L-methionine</name>
        <dbReference type="ChEBI" id="CHEBI:57844"/>
        <note>ligand shared between two neighboring subunits</note>
    </ligand>
</feature>
<feature type="binding site" description="in other chain" evidence="1">
    <location>
        <begin position="167"/>
        <end position="169"/>
    </location>
    <ligand>
        <name>ATP</name>
        <dbReference type="ChEBI" id="CHEBI:30616"/>
        <note>ligand shared between two neighboring subunits</note>
    </ligand>
</feature>
<feature type="binding site" description="in other chain" evidence="1">
    <location>
        <begin position="233"/>
        <end position="234"/>
    </location>
    <ligand>
        <name>ATP</name>
        <dbReference type="ChEBI" id="CHEBI:30616"/>
        <note>ligand shared between two neighboring subunits</note>
    </ligand>
</feature>
<feature type="binding site" evidence="1">
    <location>
        <position position="242"/>
    </location>
    <ligand>
        <name>ATP</name>
        <dbReference type="ChEBI" id="CHEBI:30616"/>
        <note>ligand shared between two neighboring subunits</note>
    </ligand>
</feature>
<feature type="binding site" evidence="1">
    <location>
        <position position="242"/>
    </location>
    <ligand>
        <name>L-methionine</name>
        <dbReference type="ChEBI" id="CHEBI:57844"/>
        <note>ligand shared between two neighboring subunits</note>
    </ligand>
</feature>
<feature type="binding site" description="in other chain" evidence="1">
    <location>
        <begin position="248"/>
        <end position="249"/>
    </location>
    <ligand>
        <name>ATP</name>
        <dbReference type="ChEBI" id="CHEBI:30616"/>
        <note>ligand shared between two neighboring subunits</note>
    </ligand>
</feature>
<feature type="binding site" evidence="1">
    <location>
        <position position="269"/>
    </location>
    <ligand>
        <name>ATP</name>
        <dbReference type="ChEBI" id="CHEBI:30616"/>
        <note>ligand shared between two neighboring subunits</note>
    </ligand>
</feature>
<feature type="binding site" description="in other chain" evidence="1">
    <location>
        <position position="273"/>
    </location>
    <ligand>
        <name>L-methionine</name>
        <dbReference type="ChEBI" id="CHEBI:57844"/>
        <note>ligand shared between two neighboring subunits</note>
    </ligand>
</feature>
<protein>
    <recommendedName>
        <fullName evidence="1">S-adenosylmethionine synthase</fullName>
        <shortName evidence="1">AdoMet synthase</shortName>
        <ecNumber evidence="1">2.5.1.6</ecNumber>
    </recommendedName>
    <alternativeName>
        <fullName evidence="1">MAT</fullName>
    </alternativeName>
    <alternativeName>
        <fullName evidence="1">Methionine adenosyltransferase</fullName>
    </alternativeName>
</protein>
<reference key="1">
    <citation type="submission" date="2007-10" db="EMBL/GenBank/DDBJ databases">
        <title>Complete sequence of Desulfococcus oleovorans Hxd3.</title>
        <authorList>
            <consortium name="US DOE Joint Genome Institute"/>
            <person name="Copeland A."/>
            <person name="Lucas S."/>
            <person name="Lapidus A."/>
            <person name="Barry K."/>
            <person name="Glavina del Rio T."/>
            <person name="Dalin E."/>
            <person name="Tice H."/>
            <person name="Pitluck S."/>
            <person name="Kiss H."/>
            <person name="Brettin T."/>
            <person name="Bruce D."/>
            <person name="Detter J.C."/>
            <person name="Han C."/>
            <person name="Schmutz J."/>
            <person name="Larimer F."/>
            <person name="Land M."/>
            <person name="Hauser L."/>
            <person name="Kyrpides N."/>
            <person name="Kim E."/>
            <person name="Wawrik B."/>
            <person name="Richardson P."/>
        </authorList>
    </citation>
    <scope>NUCLEOTIDE SEQUENCE [LARGE SCALE GENOMIC DNA]</scope>
    <source>
        <strain>DSM 6200 / JCM 39069 / Hxd3</strain>
    </source>
</reference>
<accession>A8ZYC8</accession>
<evidence type="ECO:0000255" key="1">
    <source>
        <dbReference type="HAMAP-Rule" id="MF_00086"/>
    </source>
</evidence>
<organism>
    <name type="scientific">Desulfosudis oleivorans (strain DSM 6200 / JCM 39069 / Hxd3)</name>
    <name type="common">Desulfococcus oleovorans</name>
    <dbReference type="NCBI Taxonomy" id="96561"/>
    <lineage>
        <taxon>Bacteria</taxon>
        <taxon>Pseudomonadati</taxon>
        <taxon>Thermodesulfobacteriota</taxon>
        <taxon>Desulfobacteria</taxon>
        <taxon>Desulfobacterales</taxon>
        <taxon>Desulfosudaceae</taxon>
        <taxon>Desulfosudis</taxon>
    </lineage>
</organism>